<reference key="1">
    <citation type="submission" date="2008-02" db="EMBL/GenBank/DDBJ databases">
        <title>Complete sequence of Pseudomonas putida W619.</title>
        <authorList>
            <person name="Copeland A."/>
            <person name="Lucas S."/>
            <person name="Lapidus A."/>
            <person name="Barry K."/>
            <person name="Detter J.C."/>
            <person name="Glavina del Rio T."/>
            <person name="Dalin E."/>
            <person name="Tice H."/>
            <person name="Pitluck S."/>
            <person name="Chain P."/>
            <person name="Malfatti S."/>
            <person name="Shin M."/>
            <person name="Vergez L."/>
            <person name="Schmutz J."/>
            <person name="Larimer F."/>
            <person name="Land M."/>
            <person name="Hauser L."/>
            <person name="Kyrpides N."/>
            <person name="Kim E."/>
            <person name="Taghavi S."/>
            <person name="Vangronsveld D."/>
            <person name="van der Lelie D."/>
            <person name="Richardson P."/>
        </authorList>
    </citation>
    <scope>NUCLEOTIDE SEQUENCE [LARGE SCALE GENOMIC DNA]</scope>
    <source>
        <strain>W619</strain>
    </source>
</reference>
<dbReference type="EC" id="4.2.1.20" evidence="1"/>
<dbReference type="EMBL" id="CP000949">
    <property type="protein sequence ID" value="ACA70606.1"/>
    <property type="molecule type" value="Genomic_DNA"/>
</dbReference>
<dbReference type="SMR" id="B1J4B0"/>
<dbReference type="STRING" id="390235.PputW619_0100"/>
<dbReference type="KEGG" id="ppw:PputW619_0100"/>
<dbReference type="eggNOG" id="COG0159">
    <property type="taxonomic scope" value="Bacteria"/>
</dbReference>
<dbReference type="HOGENOM" id="CLU_016734_0_4_6"/>
<dbReference type="OrthoDB" id="9804578at2"/>
<dbReference type="UniPathway" id="UPA00035">
    <property type="reaction ID" value="UER00044"/>
</dbReference>
<dbReference type="GO" id="GO:0005829">
    <property type="term" value="C:cytosol"/>
    <property type="evidence" value="ECO:0007669"/>
    <property type="project" value="TreeGrafter"/>
</dbReference>
<dbReference type="GO" id="GO:0004834">
    <property type="term" value="F:tryptophan synthase activity"/>
    <property type="evidence" value="ECO:0007669"/>
    <property type="project" value="UniProtKB-UniRule"/>
</dbReference>
<dbReference type="CDD" id="cd04724">
    <property type="entry name" value="Tryptophan_synthase_alpha"/>
    <property type="match status" value="1"/>
</dbReference>
<dbReference type="FunFam" id="3.20.20.70:FF:000037">
    <property type="entry name" value="Tryptophan synthase alpha chain"/>
    <property type="match status" value="1"/>
</dbReference>
<dbReference type="Gene3D" id="3.20.20.70">
    <property type="entry name" value="Aldolase class I"/>
    <property type="match status" value="1"/>
</dbReference>
<dbReference type="HAMAP" id="MF_00131">
    <property type="entry name" value="Trp_synth_alpha"/>
    <property type="match status" value="1"/>
</dbReference>
<dbReference type="InterPro" id="IPR013785">
    <property type="entry name" value="Aldolase_TIM"/>
</dbReference>
<dbReference type="InterPro" id="IPR011060">
    <property type="entry name" value="RibuloseP-bd_barrel"/>
</dbReference>
<dbReference type="InterPro" id="IPR018204">
    <property type="entry name" value="Trp_synthase_alpha_AS"/>
</dbReference>
<dbReference type="InterPro" id="IPR002028">
    <property type="entry name" value="Trp_synthase_suA"/>
</dbReference>
<dbReference type="NCBIfam" id="TIGR00262">
    <property type="entry name" value="trpA"/>
    <property type="match status" value="1"/>
</dbReference>
<dbReference type="PANTHER" id="PTHR43406:SF1">
    <property type="entry name" value="TRYPTOPHAN SYNTHASE ALPHA CHAIN, CHLOROPLASTIC"/>
    <property type="match status" value="1"/>
</dbReference>
<dbReference type="PANTHER" id="PTHR43406">
    <property type="entry name" value="TRYPTOPHAN SYNTHASE, ALPHA CHAIN"/>
    <property type="match status" value="1"/>
</dbReference>
<dbReference type="Pfam" id="PF00290">
    <property type="entry name" value="Trp_syntA"/>
    <property type="match status" value="1"/>
</dbReference>
<dbReference type="SUPFAM" id="SSF51366">
    <property type="entry name" value="Ribulose-phoshate binding barrel"/>
    <property type="match status" value="1"/>
</dbReference>
<dbReference type="PROSITE" id="PS00167">
    <property type="entry name" value="TRP_SYNTHASE_ALPHA"/>
    <property type="match status" value="1"/>
</dbReference>
<protein>
    <recommendedName>
        <fullName evidence="1">Tryptophan synthase alpha chain</fullName>
        <ecNumber evidence="1">4.2.1.20</ecNumber>
    </recommendedName>
</protein>
<gene>
    <name evidence="1" type="primary">trpA</name>
    <name type="ordered locus">PputW619_0100</name>
</gene>
<name>TRPA_PSEPW</name>
<comment type="function">
    <text evidence="1">The alpha subunit is responsible for the aldol cleavage of indoleglycerol phosphate to indole and glyceraldehyde 3-phosphate.</text>
</comment>
<comment type="catalytic activity">
    <reaction evidence="1">
        <text>(1S,2R)-1-C-(indol-3-yl)glycerol 3-phosphate + L-serine = D-glyceraldehyde 3-phosphate + L-tryptophan + H2O</text>
        <dbReference type="Rhea" id="RHEA:10532"/>
        <dbReference type="ChEBI" id="CHEBI:15377"/>
        <dbReference type="ChEBI" id="CHEBI:33384"/>
        <dbReference type="ChEBI" id="CHEBI:57912"/>
        <dbReference type="ChEBI" id="CHEBI:58866"/>
        <dbReference type="ChEBI" id="CHEBI:59776"/>
        <dbReference type="EC" id="4.2.1.20"/>
    </reaction>
</comment>
<comment type="pathway">
    <text evidence="1">Amino-acid biosynthesis; L-tryptophan biosynthesis; L-tryptophan from chorismate: step 5/5.</text>
</comment>
<comment type="subunit">
    <text evidence="1">Tetramer of two alpha and two beta chains.</text>
</comment>
<comment type="similarity">
    <text evidence="1">Belongs to the TrpA family.</text>
</comment>
<sequence>MSRLEQRFAELKAEGRSALVTFVTAGDPGYDASLQILKGLPAAGADVIELGMPFTDPMADGVAIQLATLRALEAGQNLAKTLQMVREFRVDNQATPIVLMGYYNPIHRFGVEKFVAEAKEAGVDGLIIVDLPPEHDAELATPAQAAGIDFIRLTTPTTDDARLPRVLERSSGFVYYVSVAGVTGAGSATTEHVTEAIARLRRHTDLPISVGFGIRTPEQAAAIARLADGVVVGSALVDKIAQAKDADQAVADVLSLCSALAEGVRGARR</sequence>
<proteinExistence type="inferred from homology"/>
<accession>B1J4B0</accession>
<feature type="chain" id="PRO_1000095741" description="Tryptophan synthase alpha chain">
    <location>
        <begin position="1"/>
        <end position="269"/>
    </location>
</feature>
<feature type="active site" description="Proton acceptor" evidence="1">
    <location>
        <position position="49"/>
    </location>
</feature>
<feature type="active site" description="Proton acceptor" evidence="1">
    <location>
        <position position="60"/>
    </location>
</feature>
<organism>
    <name type="scientific">Pseudomonas putida (strain W619)</name>
    <dbReference type="NCBI Taxonomy" id="390235"/>
    <lineage>
        <taxon>Bacteria</taxon>
        <taxon>Pseudomonadati</taxon>
        <taxon>Pseudomonadota</taxon>
        <taxon>Gammaproteobacteria</taxon>
        <taxon>Pseudomonadales</taxon>
        <taxon>Pseudomonadaceae</taxon>
        <taxon>Pseudomonas</taxon>
    </lineage>
</organism>
<evidence type="ECO:0000255" key="1">
    <source>
        <dbReference type="HAMAP-Rule" id="MF_00131"/>
    </source>
</evidence>
<keyword id="KW-0028">Amino-acid biosynthesis</keyword>
<keyword id="KW-0057">Aromatic amino acid biosynthesis</keyword>
<keyword id="KW-0456">Lyase</keyword>
<keyword id="KW-0822">Tryptophan biosynthesis</keyword>